<reference key="1">
    <citation type="journal article" date="2002" name="Proc. Natl. Acad. Sci. U.S.A.">
        <title>Genome sequence and comparative microarray analysis of serotype M18 group A Streptococcus strains associated with acute rheumatic fever outbreaks.</title>
        <authorList>
            <person name="Smoot J.C."/>
            <person name="Barbian K.D."/>
            <person name="Van Gompel J.J."/>
            <person name="Smoot L.M."/>
            <person name="Chaussee M.S."/>
            <person name="Sylva G.L."/>
            <person name="Sturdevant D.E."/>
            <person name="Ricklefs S.M."/>
            <person name="Porcella S.F."/>
            <person name="Parkins L.D."/>
            <person name="Beres S.B."/>
            <person name="Campbell D.S."/>
            <person name="Smith T.M."/>
            <person name="Zhang Q."/>
            <person name="Kapur V."/>
            <person name="Daly J.A."/>
            <person name="Veasy L.G."/>
            <person name="Musser J.M."/>
        </authorList>
    </citation>
    <scope>NUCLEOTIDE SEQUENCE [LARGE SCALE GENOMIC DNA]</scope>
    <source>
        <strain>MGAS8232</strain>
    </source>
</reference>
<accession>Q8NZI5</accession>
<organism>
    <name type="scientific">Streptococcus pyogenes serotype M18 (strain MGAS8232)</name>
    <dbReference type="NCBI Taxonomy" id="186103"/>
    <lineage>
        <taxon>Bacteria</taxon>
        <taxon>Bacillati</taxon>
        <taxon>Bacillota</taxon>
        <taxon>Bacilli</taxon>
        <taxon>Lactobacillales</taxon>
        <taxon>Streptococcaceae</taxon>
        <taxon>Streptococcus</taxon>
    </lineage>
</organism>
<evidence type="ECO:0000255" key="1">
    <source>
        <dbReference type="HAMAP-Rule" id="MF_00092"/>
    </source>
</evidence>
<proteinExistence type="inferred from homology"/>
<dbReference type="EC" id="3.1.-.-" evidence="1"/>
<dbReference type="EC" id="3.6.4.-" evidence="1"/>
<dbReference type="EMBL" id="AE009949">
    <property type="protein sequence ID" value="AAL98405.1"/>
    <property type="molecule type" value="Genomic_DNA"/>
</dbReference>
<dbReference type="RefSeq" id="WP_011018192.1">
    <property type="nucleotide sequence ID" value="NC_003485.1"/>
</dbReference>
<dbReference type="SMR" id="Q8NZI5"/>
<dbReference type="KEGG" id="spm:spyM18_1903"/>
<dbReference type="HOGENOM" id="CLU_011252_2_1_9"/>
<dbReference type="GO" id="GO:0005524">
    <property type="term" value="F:ATP binding"/>
    <property type="evidence" value="ECO:0007669"/>
    <property type="project" value="UniProtKB-UniRule"/>
</dbReference>
<dbReference type="GO" id="GO:0016887">
    <property type="term" value="F:ATP hydrolysis activity"/>
    <property type="evidence" value="ECO:0007669"/>
    <property type="project" value="InterPro"/>
</dbReference>
<dbReference type="GO" id="GO:0140664">
    <property type="term" value="F:ATP-dependent DNA damage sensor activity"/>
    <property type="evidence" value="ECO:0007669"/>
    <property type="project" value="InterPro"/>
</dbReference>
<dbReference type="GO" id="GO:0004519">
    <property type="term" value="F:endonuclease activity"/>
    <property type="evidence" value="ECO:0007669"/>
    <property type="project" value="UniProtKB-UniRule"/>
</dbReference>
<dbReference type="GO" id="GO:0030983">
    <property type="term" value="F:mismatched DNA binding"/>
    <property type="evidence" value="ECO:0007669"/>
    <property type="project" value="InterPro"/>
</dbReference>
<dbReference type="GO" id="GO:0043023">
    <property type="term" value="F:ribosomal large subunit binding"/>
    <property type="evidence" value="ECO:0007669"/>
    <property type="project" value="UniProtKB-UniRule"/>
</dbReference>
<dbReference type="GO" id="GO:0019843">
    <property type="term" value="F:rRNA binding"/>
    <property type="evidence" value="ECO:0007669"/>
    <property type="project" value="UniProtKB-UniRule"/>
</dbReference>
<dbReference type="GO" id="GO:0006298">
    <property type="term" value="P:mismatch repair"/>
    <property type="evidence" value="ECO:0007669"/>
    <property type="project" value="InterPro"/>
</dbReference>
<dbReference type="GO" id="GO:0045910">
    <property type="term" value="P:negative regulation of DNA recombination"/>
    <property type="evidence" value="ECO:0007669"/>
    <property type="project" value="InterPro"/>
</dbReference>
<dbReference type="GO" id="GO:0072344">
    <property type="term" value="P:rescue of stalled ribosome"/>
    <property type="evidence" value="ECO:0007669"/>
    <property type="project" value="UniProtKB-UniRule"/>
</dbReference>
<dbReference type="CDD" id="cd03280">
    <property type="entry name" value="ABC_MutS2"/>
    <property type="match status" value="1"/>
</dbReference>
<dbReference type="FunFam" id="3.30.1370.110:FF:000004">
    <property type="entry name" value="Endonuclease MutS2"/>
    <property type="match status" value="1"/>
</dbReference>
<dbReference type="FunFam" id="3.40.50.300:FF:000830">
    <property type="entry name" value="Endonuclease MutS2"/>
    <property type="match status" value="1"/>
</dbReference>
<dbReference type="Gene3D" id="3.30.1370.110">
    <property type="match status" value="1"/>
</dbReference>
<dbReference type="Gene3D" id="3.40.50.300">
    <property type="entry name" value="P-loop containing nucleotide triphosphate hydrolases"/>
    <property type="match status" value="1"/>
</dbReference>
<dbReference type="HAMAP" id="MF_00092">
    <property type="entry name" value="MutS2"/>
    <property type="match status" value="1"/>
</dbReference>
<dbReference type="InterPro" id="IPR000432">
    <property type="entry name" value="DNA_mismatch_repair_MutS_C"/>
</dbReference>
<dbReference type="InterPro" id="IPR007696">
    <property type="entry name" value="DNA_mismatch_repair_MutS_core"/>
</dbReference>
<dbReference type="InterPro" id="IPR036187">
    <property type="entry name" value="DNA_mismatch_repair_MutS_sf"/>
</dbReference>
<dbReference type="InterPro" id="IPR046893">
    <property type="entry name" value="MSSS"/>
</dbReference>
<dbReference type="InterPro" id="IPR045076">
    <property type="entry name" value="MutS"/>
</dbReference>
<dbReference type="InterPro" id="IPR005747">
    <property type="entry name" value="MutS2"/>
</dbReference>
<dbReference type="InterPro" id="IPR027417">
    <property type="entry name" value="P-loop_NTPase"/>
</dbReference>
<dbReference type="InterPro" id="IPR002625">
    <property type="entry name" value="Smr_dom"/>
</dbReference>
<dbReference type="InterPro" id="IPR036063">
    <property type="entry name" value="Smr_dom_sf"/>
</dbReference>
<dbReference type="NCBIfam" id="TIGR01069">
    <property type="entry name" value="mutS2"/>
    <property type="match status" value="1"/>
</dbReference>
<dbReference type="PANTHER" id="PTHR48466:SF2">
    <property type="entry name" value="OS10G0509000 PROTEIN"/>
    <property type="match status" value="1"/>
</dbReference>
<dbReference type="PANTHER" id="PTHR48466">
    <property type="entry name" value="OS10G0509000 PROTEIN-RELATED"/>
    <property type="match status" value="1"/>
</dbReference>
<dbReference type="Pfam" id="PF20297">
    <property type="entry name" value="MSSS"/>
    <property type="match status" value="1"/>
</dbReference>
<dbReference type="Pfam" id="PF00488">
    <property type="entry name" value="MutS_V"/>
    <property type="match status" value="1"/>
</dbReference>
<dbReference type="Pfam" id="PF01713">
    <property type="entry name" value="Smr"/>
    <property type="match status" value="1"/>
</dbReference>
<dbReference type="PIRSF" id="PIRSF005814">
    <property type="entry name" value="MutS_YshD"/>
    <property type="match status" value="1"/>
</dbReference>
<dbReference type="SMART" id="SM00534">
    <property type="entry name" value="MUTSac"/>
    <property type="match status" value="1"/>
</dbReference>
<dbReference type="SMART" id="SM00533">
    <property type="entry name" value="MUTSd"/>
    <property type="match status" value="1"/>
</dbReference>
<dbReference type="SMART" id="SM00463">
    <property type="entry name" value="SMR"/>
    <property type="match status" value="1"/>
</dbReference>
<dbReference type="SUPFAM" id="SSF48334">
    <property type="entry name" value="DNA repair protein MutS, domain III"/>
    <property type="match status" value="1"/>
</dbReference>
<dbReference type="SUPFAM" id="SSF52540">
    <property type="entry name" value="P-loop containing nucleoside triphosphate hydrolases"/>
    <property type="match status" value="1"/>
</dbReference>
<dbReference type="SUPFAM" id="SSF160443">
    <property type="entry name" value="SMR domain-like"/>
    <property type="match status" value="1"/>
</dbReference>
<dbReference type="PROSITE" id="PS00486">
    <property type="entry name" value="DNA_MISMATCH_REPAIR_2"/>
    <property type="match status" value="1"/>
</dbReference>
<dbReference type="PROSITE" id="PS50828">
    <property type="entry name" value="SMR"/>
    <property type="match status" value="1"/>
</dbReference>
<comment type="function">
    <text evidence="1">Endonuclease that is involved in the suppression of homologous recombination and thus may have a key role in the control of bacterial genetic diversity.</text>
</comment>
<comment type="function">
    <text evidence="1">Acts as a ribosome collision sensor, splitting the ribosome into its 2 subunits. Detects stalled/collided 70S ribosomes which it binds and splits by an ATP-hydrolysis driven conformational change. Acts upstream of the ribosome quality control system (RQC), a ribosome-associated complex that mediates the extraction of incompletely synthesized nascent chains from stalled ribosomes and their subsequent degradation. Probably generates substrates for RQC.</text>
</comment>
<comment type="subunit">
    <text evidence="1">Homodimer. Binds to stalled ribosomes, contacting rRNA.</text>
</comment>
<comment type="similarity">
    <text evidence="1">Belongs to the DNA mismatch repair MutS family. MutS2 subfamily.</text>
</comment>
<sequence>MNNKILEQLEFNKVKELLLPYLKTEQSQEELLELEPMTEAPKIEKSFNEISDMEQIFVEHHSFGIVSLSSISESLKRLELSADLNIQELLAIKKVLQSSSDMIHFYSDLDNVSFQSLDRLFENLEQFPNLQGSFQAINDGGFLEHFASPELERIRRQLTNSERRVRQILQDMLKEKAELLSENLIASRSGRSVLPVKNTYRNRISGVVHDISSSGSTVYIEPRAVVTLNEEITQLRADERHEEGRILHAFSDLLRPHVATIRNNAWILGHLDLVRAKYLFMSDNKATIPKISNDSTLALINVRHPLLSNPVANDLHFDHDLTAIVITGPNTGGKTIMLKTLGLAQLMGQSGLPVLADKGSKIAVFNNIFADIGDEQSIEQSLSTFSSHMTHIVSILNEADHNSLVLFDELGAGTDPQEGASLAMAILEHLRLSHIKTMATTHYPELKAYGIETNFVENASMEFDAETLSPTYRFMQGVPGRSNAFEIASRLGLAPFIVKQAKQMTDSDSDVNRIIEQLEAQTLETRRRLDHIKEVEQENLKFNRAVKKLYNEFSHERDKELEKIYQEAQEIVDMALNESDTILKKLNDKSQLKPHEIIDAKAQIKKLAPQVDLSKNKVLNKAKKIKAARAPRIGDDIIVTSYGQRGTLTSQLKDGRWEAQVGIIKMTLTHDEFTLVRVQEEQKVKNKQINVVKKADSSGPRARLDLRGKRYEEAMQELDHFIDQALLNNMGQVDIIHGIGTGVIREGVTKYLRRHKHVKHFAYAPQNAGGSGATIVTLG</sequence>
<keyword id="KW-0067">ATP-binding</keyword>
<keyword id="KW-0238">DNA-binding</keyword>
<keyword id="KW-0255">Endonuclease</keyword>
<keyword id="KW-0378">Hydrolase</keyword>
<keyword id="KW-0540">Nuclease</keyword>
<keyword id="KW-0547">Nucleotide-binding</keyword>
<keyword id="KW-0694">RNA-binding</keyword>
<keyword id="KW-0699">rRNA-binding</keyword>
<gene>
    <name evidence="1" type="primary">mutS2</name>
    <name evidence="1" type="synonym">rqcU</name>
    <name type="ordered locus">spyM18_1903</name>
</gene>
<protein>
    <recommendedName>
        <fullName evidence="1">Endonuclease MutS2</fullName>
        <ecNumber evidence="1">3.1.-.-</ecNumber>
    </recommendedName>
    <alternativeName>
        <fullName evidence="1">Ribosome-associated protein quality control-upstream factor</fullName>
        <shortName evidence="1">RQC-upstream factor</shortName>
        <shortName evidence="1">RqcU</shortName>
        <ecNumber evidence="1">3.6.4.-</ecNumber>
    </alternativeName>
</protein>
<feature type="chain" id="PRO_1000093395" description="Endonuclease MutS2">
    <location>
        <begin position="1"/>
        <end position="779"/>
    </location>
</feature>
<feature type="domain" description="Smr" evidence="1">
    <location>
        <begin position="704"/>
        <end position="779"/>
    </location>
</feature>
<feature type="binding site" evidence="1">
    <location>
        <begin position="328"/>
        <end position="335"/>
    </location>
    <ligand>
        <name>ATP</name>
        <dbReference type="ChEBI" id="CHEBI:30616"/>
    </ligand>
</feature>
<name>MUTS2_STRP8</name>